<comment type="function">
    <text evidence="1">Catalyzes the attachment of isoleucine to tRNA(Ile). As IleRS can inadvertently accommodate and process structurally similar amino acids such as valine, to avoid such errors it has two additional distinct tRNA(Ile)-dependent editing activities. One activity is designated as 'pretransfer' editing and involves the hydrolysis of activated Val-AMP. The other activity is designated 'posttransfer' editing and involves deacylation of mischarged Val-tRNA(Ile).</text>
</comment>
<comment type="catalytic activity">
    <reaction evidence="1">
        <text>tRNA(Ile) + L-isoleucine + ATP = L-isoleucyl-tRNA(Ile) + AMP + diphosphate</text>
        <dbReference type="Rhea" id="RHEA:11060"/>
        <dbReference type="Rhea" id="RHEA-COMP:9666"/>
        <dbReference type="Rhea" id="RHEA-COMP:9695"/>
        <dbReference type="ChEBI" id="CHEBI:30616"/>
        <dbReference type="ChEBI" id="CHEBI:33019"/>
        <dbReference type="ChEBI" id="CHEBI:58045"/>
        <dbReference type="ChEBI" id="CHEBI:78442"/>
        <dbReference type="ChEBI" id="CHEBI:78528"/>
        <dbReference type="ChEBI" id="CHEBI:456215"/>
        <dbReference type="EC" id="6.1.1.5"/>
    </reaction>
</comment>
<comment type="cofactor">
    <cofactor evidence="1">
        <name>Zn(2+)</name>
        <dbReference type="ChEBI" id="CHEBI:29105"/>
    </cofactor>
    <text evidence="1">Binds 1 zinc ion per subunit.</text>
</comment>
<comment type="subunit">
    <text evidence="1">Monomer.</text>
</comment>
<comment type="subcellular location">
    <subcellularLocation>
        <location evidence="1">Cytoplasm</location>
    </subcellularLocation>
</comment>
<comment type="domain">
    <text evidence="1">IleRS has two distinct active sites: one for aminoacylation and one for editing. The misactivated valine is translocated from the active site to the editing site, which sterically excludes the correctly activated isoleucine. The single editing site contains two valyl binding pockets, one specific for each substrate (Val-AMP or Val-tRNA(Ile)).</text>
</comment>
<comment type="similarity">
    <text evidence="1">Belongs to the class-I aminoacyl-tRNA synthetase family. IleS type 1 subfamily.</text>
</comment>
<accession>P41257</accession>
<accession>Q0P9J1</accession>
<accession>Q9PNN0</accession>
<evidence type="ECO:0000255" key="1">
    <source>
        <dbReference type="HAMAP-Rule" id="MF_02002"/>
    </source>
</evidence>
<evidence type="ECO:0000305" key="2"/>
<gene>
    <name evidence="1" type="primary">ileS</name>
    <name type="ordered locus">Cj1061c</name>
</gene>
<protein>
    <recommendedName>
        <fullName evidence="1">Isoleucine--tRNA ligase</fullName>
        <ecNumber evidence="1">6.1.1.5</ecNumber>
    </recommendedName>
    <alternativeName>
        <fullName evidence="1">Isoleucyl-tRNA synthetase</fullName>
        <shortName evidence="1">IleRS</shortName>
    </alternativeName>
</protein>
<sequence>MDYKETLLLPSTTFAMRANLAELEPQRFKKWFEQNYAYEKMKENRKNAKKSFTLHDGPPYANGHIHIGHALNKILKETIIKTHYFKGESVRFTPGWDCHGLPIEQQVEVKLGEKKKSLSKKEIREFCRQHASEFVDIQREEFKDLGIIADWDKPYLTMKFEFEAAIYRTLCEIAKKGLLCERSKPVFWSWAAKSALAEAEVEYQDKEDYSIFVAFDLDVKACEKLGVSKASAVIWTTTPWTLVANQAIALNPNENYVITKEGLIFASALLKSMVEKGLTSGEIQKELNAKEFEKLEAINPLNGRKSVLIMGEHVLMDGGSGLVHTAPGHGEDDYYACLKYGIEVLMPVDDSGCYDETLRAKGLLPSHLLEEFIGLHIFKANEKILELLGEKLLHSSKFIHSYPFCWRTHKPVIYRATKQWFILMDEPKLQGKTLRECAKEQLLKTTFYPQSGVKRIGSMVENRPDWCISRQRDWGTPIAFFRDKNTKEVIFDDELFDFVAAIFEKHGADAWWEFEIKDLIPTNSKYKAENLEKVYDILDVWFDSGSTFNAVLNSGLYDAGEKRASMYLEGSDQHRGWFQSSLLVGTAINESAPYESILTHGFTTDEKGQKMSKSKGNVIASEYVAKTYGVEILRLWILLSDYSSDLKISDNILKQVGEQYRKIRNTIRFLLANTNDLKDLEVKEFSFIDKWILSRATKVFKASKEAFFAYEFAKGFSLLLNFLSADLSGIYLDISKDRLYCDSENAQRRKSAQVAMALMAKELLNLLAPNLSYSVDEALEHANVLIKGDAKDVFDLSLTQDFDYDFGIDDTFLMSAREKFFEQIDILKKDKIIKSTLELNLNISFNKFPNEELADWFMVSQISNENEEILAEFEVENEKFKITKASLCKCPRCWKLQSKNEETPCLRCEEVLKGVQC</sequence>
<proteinExistence type="inferred from homology"/>
<organism>
    <name type="scientific">Campylobacter jejuni subsp. jejuni serotype O:2 (strain ATCC 700819 / NCTC 11168)</name>
    <dbReference type="NCBI Taxonomy" id="192222"/>
    <lineage>
        <taxon>Bacteria</taxon>
        <taxon>Pseudomonadati</taxon>
        <taxon>Campylobacterota</taxon>
        <taxon>Epsilonproteobacteria</taxon>
        <taxon>Campylobacterales</taxon>
        <taxon>Campylobacteraceae</taxon>
        <taxon>Campylobacter</taxon>
    </lineage>
</organism>
<dbReference type="EC" id="6.1.1.5" evidence="1"/>
<dbReference type="EMBL" id="U15295">
    <property type="protein sequence ID" value="AAA91296.1"/>
    <property type="molecule type" value="Genomic_DNA"/>
</dbReference>
<dbReference type="EMBL" id="AL111168">
    <property type="protein sequence ID" value="CAL35179.1"/>
    <property type="molecule type" value="Genomic_DNA"/>
</dbReference>
<dbReference type="PIR" id="B81309">
    <property type="entry name" value="B81309"/>
</dbReference>
<dbReference type="RefSeq" id="WP_002907389.1">
    <property type="nucleotide sequence ID" value="NZ_SZUC01000001.1"/>
</dbReference>
<dbReference type="RefSeq" id="YP_002344456.1">
    <property type="nucleotide sequence ID" value="NC_002163.1"/>
</dbReference>
<dbReference type="SMR" id="P41257"/>
<dbReference type="IntAct" id="P41257">
    <property type="interactions" value="13"/>
</dbReference>
<dbReference type="STRING" id="192222.Cj1061c"/>
<dbReference type="PaxDb" id="192222-Cj1061c"/>
<dbReference type="EnsemblBacteria" id="CAL35179">
    <property type="protein sequence ID" value="CAL35179"/>
    <property type="gene ID" value="Cj1061c"/>
</dbReference>
<dbReference type="GeneID" id="905353"/>
<dbReference type="KEGG" id="cje:Cj1061c"/>
<dbReference type="PATRIC" id="fig|192222.6.peg.1043"/>
<dbReference type="eggNOG" id="COG0060">
    <property type="taxonomic scope" value="Bacteria"/>
</dbReference>
<dbReference type="HOGENOM" id="CLU_001493_7_1_7"/>
<dbReference type="OrthoDB" id="9810365at2"/>
<dbReference type="Proteomes" id="UP000000799">
    <property type="component" value="Chromosome"/>
</dbReference>
<dbReference type="GO" id="GO:0005829">
    <property type="term" value="C:cytosol"/>
    <property type="evidence" value="ECO:0007669"/>
    <property type="project" value="TreeGrafter"/>
</dbReference>
<dbReference type="GO" id="GO:0002161">
    <property type="term" value="F:aminoacyl-tRNA deacylase activity"/>
    <property type="evidence" value="ECO:0007669"/>
    <property type="project" value="InterPro"/>
</dbReference>
<dbReference type="GO" id="GO:0005524">
    <property type="term" value="F:ATP binding"/>
    <property type="evidence" value="ECO:0007669"/>
    <property type="project" value="UniProtKB-UniRule"/>
</dbReference>
<dbReference type="GO" id="GO:0004822">
    <property type="term" value="F:isoleucine-tRNA ligase activity"/>
    <property type="evidence" value="ECO:0007669"/>
    <property type="project" value="UniProtKB-UniRule"/>
</dbReference>
<dbReference type="GO" id="GO:0000049">
    <property type="term" value="F:tRNA binding"/>
    <property type="evidence" value="ECO:0007669"/>
    <property type="project" value="InterPro"/>
</dbReference>
<dbReference type="GO" id="GO:0008270">
    <property type="term" value="F:zinc ion binding"/>
    <property type="evidence" value="ECO:0007669"/>
    <property type="project" value="UniProtKB-UniRule"/>
</dbReference>
<dbReference type="GO" id="GO:0006428">
    <property type="term" value="P:isoleucyl-tRNA aminoacylation"/>
    <property type="evidence" value="ECO:0007669"/>
    <property type="project" value="UniProtKB-UniRule"/>
</dbReference>
<dbReference type="CDD" id="cd07960">
    <property type="entry name" value="Anticodon_Ia_Ile_BEm"/>
    <property type="match status" value="1"/>
</dbReference>
<dbReference type="CDD" id="cd00818">
    <property type="entry name" value="IleRS_core"/>
    <property type="match status" value="1"/>
</dbReference>
<dbReference type="FunFam" id="3.40.50.620:FF:000092">
    <property type="entry name" value="Isoleucine--tRNA ligase"/>
    <property type="match status" value="1"/>
</dbReference>
<dbReference type="Gene3D" id="1.10.730.20">
    <property type="match status" value="1"/>
</dbReference>
<dbReference type="Gene3D" id="3.40.50.620">
    <property type="entry name" value="HUPs"/>
    <property type="match status" value="2"/>
</dbReference>
<dbReference type="Gene3D" id="1.10.10.830">
    <property type="entry name" value="Ile-tRNA synthetase CP2 domain-like"/>
    <property type="match status" value="1"/>
</dbReference>
<dbReference type="Gene3D" id="3.90.740.10">
    <property type="entry name" value="Valyl/Leucyl/Isoleucyl-tRNA synthetase, editing domain"/>
    <property type="match status" value="1"/>
</dbReference>
<dbReference type="HAMAP" id="MF_02002">
    <property type="entry name" value="Ile_tRNA_synth_type1"/>
    <property type="match status" value="1"/>
</dbReference>
<dbReference type="InterPro" id="IPR001412">
    <property type="entry name" value="aa-tRNA-synth_I_CS"/>
</dbReference>
<dbReference type="InterPro" id="IPR002300">
    <property type="entry name" value="aa-tRNA-synth_Ia"/>
</dbReference>
<dbReference type="InterPro" id="IPR033708">
    <property type="entry name" value="Anticodon_Ile_BEm"/>
</dbReference>
<dbReference type="InterPro" id="IPR002301">
    <property type="entry name" value="Ile-tRNA-ligase"/>
</dbReference>
<dbReference type="InterPro" id="IPR023585">
    <property type="entry name" value="Ile-tRNA-ligase_type1"/>
</dbReference>
<dbReference type="InterPro" id="IPR050081">
    <property type="entry name" value="Ile-tRNA_ligase"/>
</dbReference>
<dbReference type="InterPro" id="IPR013155">
    <property type="entry name" value="M/V/L/I-tRNA-synth_anticd-bd"/>
</dbReference>
<dbReference type="InterPro" id="IPR014729">
    <property type="entry name" value="Rossmann-like_a/b/a_fold"/>
</dbReference>
<dbReference type="InterPro" id="IPR009080">
    <property type="entry name" value="tRNAsynth_Ia_anticodon-bd"/>
</dbReference>
<dbReference type="InterPro" id="IPR009008">
    <property type="entry name" value="Val/Leu/Ile-tRNA-synth_edit"/>
</dbReference>
<dbReference type="NCBIfam" id="TIGR00392">
    <property type="entry name" value="ileS"/>
    <property type="match status" value="1"/>
</dbReference>
<dbReference type="PANTHER" id="PTHR42765:SF1">
    <property type="entry name" value="ISOLEUCINE--TRNA LIGASE, MITOCHONDRIAL"/>
    <property type="match status" value="1"/>
</dbReference>
<dbReference type="PANTHER" id="PTHR42765">
    <property type="entry name" value="SOLEUCYL-TRNA SYNTHETASE"/>
    <property type="match status" value="1"/>
</dbReference>
<dbReference type="Pfam" id="PF08264">
    <property type="entry name" value="Anticodon_1"/>
    <property type="match status" value="1"/>
</dbReference>
<dbReference type="Pfam" id="PF00133">
    <property type="entry name" value="tRNA-synt_1"/>
    <property type="match status" value="1"/>
</dbReference>
<dbReference type="PRINTS" id="PR00984">
    <property type="entry name" value="TRNASYNTHILE"/>
</dbReference>
<dbReference type="SUPFAM" id="SSF47323">
    <property type="entry name" value="Anticodon-binding domain of a subclass of class I aminoacyl-tRNA synthetases"/>
    <property type="match status" value="1"/>
</dbReference>
<dbReference type="SUPFAM" id="SSF52374">
    <property type="entry name" value="Nucleotidylyl transferase"/>
    <property type="match status" value="1"/>
</dbReference>
<dbReference type="SUPFAM" id="SSF50677">
    <property type="entry name" value="ValRS/IleRS/LeuRS editing domain"/>
    <property type="match status" value="1"/>
</dbReference>
<dbReference type="PROSITE" id="PS00178">
    <property type="entry name" value="AA_TRNA_LIGASE_I"/>
    <property type="match status" value="1"/>
</dbReference>
<name>SYI_CAMJE</name>
<feature type="chain" id="PRO_0000098372" description="Isoleucine--tRNA ligase">
    <location>
        <begin position="1"/>
        <end position="917"/>
    </location>
</feature>
<feature type="short sequence motif" description="'HIGH' region">
    <location>
        <begin position="59"/>
        <end position="69"/>
    </location>
</feature>
<feature type="short sequence motif" description="'KMSKS' region">
    <location>
        <begin position="610"/>
        <end position="614"/>
    </location>
</feature>
<feature type="binding site" evidence="1">
    <location>
        <position position="569"/>
    </location>
    <ligand>
        <name>L-isoleucyl-5'-AMP</name>
        <dbReference type="ChEBI" id="CHEBI:178002"/>
    </ligand>
</feature>
<feature type="binding site" evidence="1">
    <location>
        <position position="613"/>
    </location>
    <ligand>
        <name>ATP</name>
        <dbReference type="ChEBI" id="CHEBI:30616"/>
    </ligand>
</feature>
<feature type="binding site" evidence="1">
    <location>
        <position position="890"/>
    </location>
    <ligand>
        <name>Zn(2+)</name>
        <dbReference type="ChEBI" id="CHEBI:29105"/>
    </ligand>
</feature>
<feature type="binding site" evidence="1">
    <location>
        <position position="893"/>
    </location>
    <ligand>
        <name>Zn(2+)</name>
        <dbReference type="ChEBI" id="CHEBI:29105"/>
    </ligand>
</feature>
<feature type="binding site" evidence="1">
    <location>
        <position position="905"/>
    </location>
    <ligand>
        <name>Zn(2+)</name>
        <dbReference type="ChEBI" id="CHEBI:29105"/>
    </ligand>
</feature>
<feature type="binding site" evidence="1">
    <location>
        <position position="908"/>
    </location>
    <ligand>
        <name>Zn(2+)</name>
        <dbReference type="ChEBI" id="CHEBI:29105"/>
    </ligand>
</feature>
<feature type="sequence conflict" description="In Ref. 1; AAA91296." evidence="2" ref="1">
    <original>D</original>
    <variation>N</variation>
    <location>
        <position position="144"/>
    </location>
</feature>
<feature type="sequence conflict" description="In Ref. 1; AAA91296." evidence="2" ref="1">
    <original>E</original>
    <variation>K</variation>
    <location>
        <position position="223"/>
    </location>
</feature>
<feature type="sequence conflict" description="In Ref. 1; AAA91296." evidence="2" ref="1">
    <original>G</original>
    <variation>R</variation>
    <location>
        <position position="362"/>
    </location>
</feature>
<feature type="sequence conflict" description="In Ref. 1; AAA91296." evidence="2" ref="1">
    <original>K</original>
    <variation>N</variation>
    <location>
        <position position="527"/>
    </location>
</feature>
<feature type="sequence conflict" description="In Ref. 1; AAA91296." evidence="2" ref="1">
    <original>A</original>
    <variation>T</variation>
    <location>
        <position position="592"/>
    </location>
</feature>
<feature type="sequence conflict" description="In Ref. 1; AAA91296." evidence="2" ref="1">
    <original>S</original>
    <variation>P</variation>
    <location>
        <position position="621"/>
    </location>
</feature>
<feature type="sequence conflict" description="In Ref. 1; AAA91296." evidence="2" ref="1">
    <original>T</original>
    <variation>S</variation>
    <location>
        <position position="697"/>
    </location>
</feature>
<feature type="sequence conflict" description="In Ref. 1; AAA91296." evidence="2" ref="1">
    <original>M</original>
    <variation>I</variation>
    <location>
        <position position="759"/>
    </location>
</feature>
<feature type="sequence conflict" description="In Ref. 1; AAA91296." evidence="2" ref="1">
    <original>P</original>
    <variation>S</variation>
    <location>
        <position position="769"/>
    </location>
</feature>
<feature type="sequence conflict" description="In Ref. 1; AAA91296." evidence="2" ref="1">
    <original>A</original>
    <variation>V</variation>
    <location>
        <position position="816"/>
    </location>
</feature>
<feature type="sequence conflict" description="In Ref. 1; AAA91296." evidence="2" ref="1">
    <original>N</original>
    <variation>D</variation>
    <location>
        <position position="900"/>
    </location>
</feature>
<feature type="sequence conflict" description="In Ref. 1; AAA91296." evidence="2" ref="1">
    <original>V</original>
    <variation>I</variation>
    <location>
        <position position="915"/>
    </location>
</feature>
<keyword id="KW-0030">Aminoacyl-tRNA synthetase</keyword>
<keyword id="KW-0067">ATP-binding</keyword>
<keyword id="KW-0963">Cytoplasm</keyword>
<keyword id="KW-0436">Ligase</keyword>
<keyword id="KW-0479">Metal-binding</keyword>
<keyword id="KW-0547">Nucleotide-binding</keyword>
<keyword id="KW-0648">Protein biosynthesis</keyword>
<keyword id="KW-1185">Reference proteome</keyword>
<keyword id="KW-0862">Zinc</keyword>
<reference key="1">
    <citation type="journal article" date="1995" name="Microbiology">
        <title>An isoleucyl-tRNA synthetase gene from Campylobacter jejuni.</title>
        <authorList>
            <person name="Hong Y."/>
            <person name="Wong T."/>
            <person name="Bourke B."/>
            <person name="Chan V.L."/>
        </authorList>
    </citation>
    <scope>NUCLEOTIDE SEQUENCE [GENOMIC DNA]</scope>
    <source>
        <strain>ATCC 43431 / TGH 9011 / Serotype O:3</strain>
    </source>
</reference>
<reference key="2">
    <citation type="journal article" date="2000" name="Nature">
        <title>The genome sequence of the food-borne pathogen Campylobacter jejuni reveals hypervariable sequences.</title>
        <authorList>
            <person name="Parkhill J."/>
            <person name="Wren B.W."/>
            <person name="Mungall K.L."/>
            <person name="Ketley J.M."/>
            <person name="Churcher C.M."/>
            <person name="Basham D."/>
            <person name="Chillingworth T."/>
            <person name="Davies R.M."/>
            <person name="Feltwell T."/>
            <person name="Holroyd S."/>
            <person name="Jagels K."/>
            <person name="Karlyshev A.V."/>
            <person name="Moule S."/>
            <person name="Pallen M.J."/>
            <person name="Penn C.W."/>
            <person name="Quail M.A."/>
            <person name="Rajandream M.A."/>
            <person name="Rutherford K.M."/>
            <person name="van Vliet A.H.M."/>
            <person name="Whitehead S."/>
            <person name="Barrell B.G."/>
        </authorList>
    </citation>
    <scope>NUCLEOTIDE SEQUENCE [LARGE SCALE GENOMIC DNA]</scope>
    <source>
        <strain>ATCC 700819 / NCTC 11168</strain>
    </source>
</reference>